<organism>
    <name type="scientific">Methanocaldococcus jannaschii (strain ATCC 43067 / DSM 2661 / JAL-1 / JCM 10045 / NBRC 100440)</name>
    <name type="common">Methanococcus jannaschii</name>
    <dbReference type="NCBI Taxonomy" id="243232"/>
    <lineage>
        <taxon>Archaea</taxon>
        <taxon>Methanobacteriati</taxon>
        <taxon>Methanobacteriota</taxon>
        <taxon>Methanomada group</taxon>
        <taxon>Methanococci</taxon>
        <taxon>Methanococcales</taxon>
        <taxon>Methanocaldococcaceae</taxon>
        <taxon>Methanocaldococcus</taxon>
    </lineage>
</organism>
<feature type="chain" id="PRO_0000094418" description="16S rRNA aminocarboxypropyltransferase">
    <location>
        <begin position="1"/>
        <end position="172"/>
    </location>
</feature>
<feature type="binding site" evidence="1 2">
    <location>
        <position position="21"/>
    </location>
    <ligand>
        <name>S-adenosyl-L-methionine</name>
        <dbReference type="ChEBI" id="CHEBI:59789"/>
    </ligand>
</feature>
<feature type="binding site" evidence="2">
    <location>
        <position position="71"/>
    </location>
    <ligand>
        <name>S-adenosyl-L-methionine</name>
        <dbReference type="ChEBI" id="CHEBI:59789"/>
    </ligand>
</feature>
<feature type="binding site" evidence="1 2">
    <location>
        <position position="93"/>
    </location>
    <ligand>
        <name>S-adenosyl-L-methionine</name>
        <dbReference type="ChEBI" id="CHEBI:59789"/>
    </ligand>
</feature>
<feature type="binding site" evidence="1 2">
    <location>
        <position position="112"/>
    </location>
    <ligand>
        <name>S-adenosyl-L-methionine</name>
        <dbReference type="ChEBI" id="CHEBI:59789"/>
    </ligand>
</feature>
<keyword id="KW-0963">Cytoplasm</keyword>
<keyword id="KW-1185">Reference proteome</keyword>
<keyword id="KW-0690">Ribosome biogenesis</keyword>
<keyword id="KW-0698">rRNA processing</keyword>
<keyword id="KW-0949">S-adenosyl-L-methionine</keyword>
<keyword id="KW-0808">Transferase</keyword>
<reference key="1">
    <citation type="journal article" date="1996" name="Science">
        <title>Complete genome sequence of the methanogenic archaeon, Methanococcus jannaschii.</title>
        <authorList>
            <person name="Bult C.J."/>
            <person name="White O."/>
            <person name="Olsen G.J."/>
            <person name="Zhou L."/>
            <person name="Fleischmann R.D."/>
            <person name="Sutton G.G."/>
            <person name="Blake J.A."/>
            <person name="FitzGerald L.M."/>
            <person name="Clayton R.A."/>
            <person name="Gocayne J.D."/>
            <person name="Kerlavage A.R."/>
            <person name="Dougherty B.A."/>
            <person name="Tomb J.-F."/>
            <person name="Adams M.D."/>
            <person name="Reich C.I."/>
            <person name="Overbeek R."/>
            <person name="Kirkness E.F."/>
            <person name="Weinstock K.G."/>
            <person name="Merrick J.M."/>
            <person name="Glodek A."/>
            <person name="Scott J.L."/>
            <person name="Geoghagen N.S.M."/>
            <person name="Weidman J.F."/>
            <person name="Fuhrmann J.L."/>
            <person name="Nguyen D."/>
            <person name="Utterback T.R."/>
            <person name="Kelley J.M."/>
            <person name="Peterson J.D."/>
            <person name="Sadow P.W."/>
            <person name="Hanna M.C."/>
            <person name="Cotton M.D."/>
            <person name="Roberts K.M."/>
            <person name="Hurst M.A."/>
            <person name="Kaine B.P."/>
            <person name="Borodovsky M."/>
            <person name="Klenk H.-P."/>
            <person name="Fraser C.M."/>
            <person name="Smith H.O."/>
            <person name="Woese C.R."/>
            <person name="Venter J.C."/>
        </authorList>
    </citation>
    <scope>NUCLEOTIDE SEQUENCE [LARGE SCALE GENOMIC DNA]</scope>
    <source>
        <strain>ATCC 43067 / DSM 2661 / JAL-1 / JCM 10045 / NBRC 100440</strain>
    </source>
</reference>
<proteinExistence type="inferred from homology"/>
<dbReference type="EC" id="2.5.1.157" evidence="2"/>
<dbReference type="EMBL" id="L77117">
    <property type="protein sequence ID" value="AAB98702.1"/>
    <property type="molecule type" value="Genomic_DNA"/>
</dbReference>
<dbReference type="PIR" id="D64388">
    <property type="entry name" value="D64388"/>
</dbReference>
<dbReference type="SMR" id="Q58118"/>
<dbReference type="FunCoup" id="Q58118">
    <property type="interactions" value="93"/>
</dbReference>
<dbReference type="STRING" id="243232.MJ_0708"/>
<dbReference type="PaxDb" id="243232-MJ_0708"/>
<dbReference type="EnsemblBacteria" id="AAB98702">
    <property type="protein sequence ID" value="AAB98702"/>
    <property type="gene ID" value="MJ_0708"/>
</dbReference>
<dbReference type="KEGG" id="mja:MJ_0708"/>
<dbReference type="eggNOG" id="arCOG04733">
    <property type="taxonomic scope" value="Archaea"/>
</dbReference>
<dbReference type="HOGENOM" id="CLU_035060_4_2_2"/>
<dbReference type="InParanoid" id="Q58118"/>
<dbReference type="PhylomeDB" id="Q58118"/>
<dbReference type="Proteomes" id="UP000000805">
    <property type="component" value="Chromosome"/>
</dbReference>
<dbReference type="GO" id="GO:0005737">
    <property type="term" value="C:cytoplasm"/>
    <property type="evidence" value="ECO:0007669"/>
    <property type="project" value="UniProtKB-SubCell"/>
</dbReference>
<dbReference type="GO" id="GO:0106388">
    <property type="term" value="F:18S rRNA aminocarboxypropyltransferase activity"/>
    <property type="evidence" value="ECO:0007669"/>
    <property type="project" value="InterPro"/>
</dbReference>
<dbReference type="GO" id="GO:1904047">
    <property type="term" value="F:S-adenosyl-L-methionine binding"/>
    <property type="evidence" value="ECO:0007669"/>
    <property type="project" value="UniProtKB-UniRule"/>
</dbReference>
<dbReference type="GO" id="GO:0000455">
    <property type="term" value="P:enzyme-directed rRNA pseudouridine synthesis"/>
    <property type="evidence" value="ECO:0007669"/>
    <property type="project" value="UniProtKB-UniRule"/>
</dbReference>
<dbReference type="HAMAP" id="MF_01116">
    <property type="entry name" value="TSR3"/>
    <property type="match status" value="1"/>
</dbReference>
<dbReference type="InterPro" id="IPR007209">
    <property type="entry name" value="RNaseL-inhib-like_metal-bd_dom"/>
</dbReference>
<dbReference type="InterPro" id="IPR022968">
    <property type="entry name" value="Tsr3-like"/>
</dbReference>
<dbReference type="InterPro" id="IPR007177">
    <property type="entry name" value="Tsr3_C"/>
</dbReference>
<dbReference type="NCBIfam" id="NF002621">
    <property type="entry name" value="PRK02287.1"/>
    <property type="match status" value="1"/>
</dbReference>
<dbReference type="PANTHER" id="PTHR20426:SF0">
    <property type="entry name" value="18S RRNA AMINOCARBOXYPROPYLTRANSFERASE"/>
    <property type="match status" value="1"/>
</dbReference>
<dbReference type="PANTHER" id="PTHR20426">
    <property type="entry name" value="RIBOSOME BIOGENESIS PROTEIN TSR3 HOMOLOG"/>
    <property type="match status" value="1"/>
</dbReference>
<dbReference type="Pfam" id="PF04068">
    <property type="entry name" value="Fer4_RLI"/>
    <property type="match status" value="1"/>
</dbReference>
<dbReference type="Pfam" id="PF04034">
    <property type="entry name" value="Ribo_biogen_C"/>
    <property type="match status" value="1"/>
</dbReference>
<gene>
    <name type="ordered locus">MJ0708</name>
</gene>
<accession>Q58118</accession>
<sequence length="172" mass="20030">MITMPKLFIYHANQCNPKKCTSLKMAKMNKAILLKNPYKVPKNSLILNPYAEKALSPEDKEIVEKFGITALDCSWKEAELMFKKFKFKNQRSLPFLVACNPINYGKPCMLSTLEAFIAALYITNFKDEAWDLTSCFKWAETFIKVNYELLERYSNAKNSMEVVEIQQDFLRK</sequence>
<protein>
    <recommendedName>
        <fullName evidence="2 3">16S rRNA aminocarboxypropyltransferase</fullName>
        <ecNumber evidence="2">2.5.1.157</ecNumber>
    </recommendedName>
</protein>
<name>TSR3_METJA</name>
<comment type="function">
    <text evidence="2">Aminocarboxypropyltransferase that catalyzes the aminocarboxypropyl transfer on pseudouridine at position 914 in 16S rRNA. It constitutes the last step in biosynthesis of the hypermodified N1-methyl-N3-(3-amino-3-carboxypropyl) pseudouridine (m1acp3-Psi).</text>
</comment>
<comment type="catalytic activity">
    <reaction evidence="2">
        <text>an N(1)-methylpseudouridine in rRNA + S-adenosyl-L-methionine = N(1)-methyl-N(3)-[(3S)-3-amino-3-carboxypropyl]pseudouridine in rRNA + S-methyl-5'-thioadenosine + H(+)</text>
        <dbReference type="Rhea" id="RHEA:63296"/>
        <dbReference type="Rhea" id="RHEA-COMP:11634"/>
        <dbReference type="Rhea" id="RHEA-COMP:16310"/>
        <dbReference type="ChEBI" id="CHEBI:15378"/>
        <dbReference type="ChEBI" id="CHEBI:17509"/>
        <dbReference type="ChEBI" id="CHEBI:59789"/>
        <dbReference type="ChEBI" id="CHEBI:74890"/>
        <dbReference type="ChEBI" id="CHEBI:146234"/>
        <dbReference type="EC" id="2.5.1.157"/>
    </reaction>
</comment>
<comment type="subcellular location">
    <subcellularLocation>
        <location evidence="2">Cytoplasm</location>
    </subcellularLocation>
</comment>
<comment type="similarity">
    <text evidence="2">Belongs to the TDD superfamily. TSR3 family.</text>
</comment>
<evidence type="ECO:0000250" key="1">
    <source>
        <dbReference type="UniProtKB" id="E1QU22"/>
    </source>
</evidence>
<evidence type="ECO:0000255" key="2">
    <source>
        <dbReference type="HAMAP-Rule" id="MF_01116"/>
    </source>
</evidence>
<evidence type="ECO:0000305" key="3"/>